<comment type="catalytic activity">
    <reaction evidence="2">
        <text>2 acetyl-CoA = acetoacetyl-CoA + CoA</text>
        <dbReference type="Rhea" id="RHEA:21036"/>
        <dbReference type="ChEBI" id="CHEBI:57286"/>
        <dbReference type="ChEBI" id="CHEBI:57287"/>
        <dbReference type="ChEBI" id="CHEBI:57288"/>
        <dbReference type="EC" id="2.3.1.9"/>
    </reaction>
</comment>
<comment type="subcellular location">
    <subcellularLocation>
        <location evidence="1">Cytoplasm</location>
    </subcellularLocation>
</comment>
<comment type="similarity">
    <text evidence="3">Belongs to the thiolase-like superfamily. Thiolase family.</text>
</comment>
<dbReference type="EC" id="2.3.1.9"/>
<dbReference type="EMBL" id="BA000018">
    <property type="protein sequence ID" value="BAB41566.1"/>
    <property type="molecule type" value="Genomic_DNA"/>
</dbReference>
<dbReference type="PIR" id="C89801">
    <property type="entry name" value="C89801"/>
</dbReference>
<dbReference type="RefSeq" id="WP_000199066.1">
    <property type="nucleotide sequence ID" value="NC_002745.2"/>
</dbReference>
<dbReference type="SMR" id="Q7A7L2"/>
<dbReference type="EnsemblBacteria" id="BAB41566">
    <property type="protein sequence ID" value="BAB41566"/>
    <property type="gene ID" value="BAB41566"/>
</dbReference>
<dbReference type="KEGG" id="sau:SA0342"/>
<dbReference type="HOGENOM" id="CLU_031026_0_0_9"/>
<dbReference type="GO" id="GO:0005737">
    <property type="term" value="C:cytoplasm"/>
    <property type="evidence" value="ECO:0007669"/>
    <property type="project" value="UniProtKB-SubCell"/>
</dbReference>
<dbReference type="GO" id="GO:0003985">
    <property type="term" value="F:acetyl-CoA C-acetyltransferase activity"/>
    <property type="evidence" value="ECO:0007669"/>
    <property type="project" value="UniProtKB-EC"/>
</dbReference>
<dbReference type="CDD" id="cd00751">
    <property type="entry name" value="thiolase"/>
    <property type="match status" value="1"/>
</dbReference>
<dbReference type="FunFam" id="3.40.47.10:FF:000010">
    <property type="entry name" value="Acetyl-CoA acetyltransferase (Thiolase)"/>
    <property type="match status" value="1"/>
</dbReference>
<dbReference type="Gene3D" id="3.40.47.10">
    <property type="match status" value="2"/>
</dbReference>
<dbReference type="InterPro" id="IPR002155">
    <property type="entry name" value="Thiolase"/>
</dbReference>
<dbReference type="InterPro" id="IPR016039">
    <property type="entry name" value="Thiolase-like"/>
</dbReference>
<dbReference type="InterPro" id="IPR020615">
    <property type="entry name" value="Thiolase_acyl_enz_int_AS"/>
</dbReference>
<dbReference type="InterPro" id="IPR020610">
    <property type="entry name" value="Thiolase_AS"/>
</dbReference>
<dbReference type="InterPro" id="IPR020617">
    <property type="entry name" value="Thiolase_C"/>
</dbReference>
<dbReference type="InterPro" id="IPR020613">
    <property type="entry name" value="Thiolase_CS"/>
</dbReference>
<dbReference type="InterPro" id="IPR020616">
    <property type="entry name" value="Thiolase_N"/>
</dbReference>
<dbReference type="NCBIfam" id="TIGR01930">
    <property type="entry name" value="AcCoA-C-Actrans"/>
    <property type="match status" value="1"/>
</dbReference>
<dbReference type="PANTHER" id="PTHR18919:SF107">
    <property type="entry name" value="ACETYL-COA ACETYLTRANSFERASE, CYTOSOLIC"/>
    <property type="match status" value="1"/>
</dbReference>
<dbReference type="PANTHER" id="PTHR18919">
    <property type="entry name" value="ACETYL-COA C-ACYLTRANSFERASE"/>
    <property type="match status" value="1"/>
</dbReference>
<dbReference type="Pfam" id="PF02803">
    <property type="entry name" value="Thiolase_C"/>
    <property type="match status" value="1"/>
</dbReference>
<dbReference type="Pfam" id="PF00108">
    <property type="entry name" value="Thiolase_N"/>
    <property type="match status" value="1"/>
</dbReference>
<dbReference type="PIRSF" id="PIRSF000429">
    <property type="entry name" value="Ac-CoA_Ac_transf"/>
    <property type="match status" value="1"/>
</dbReference>
<dbReference type="SUPFAM" id="SSF53901">
    <property type="entry name" value="Thiolase-like"/>
    <property type="match status" value="2"/>
</dbReference>
<dbReference type="PROSITE" id="PS00098">
    <property type="entry name" value="THIOLASE_1"/>
    <property type="match status" value="1"/>
</dbReference>
<dbReference type="PROSITE" id="PS00737">
    <property type="entry name" value="THIOLASE_2"/>
    <property type="match status" value="1"/>
</dbReference>
<dbReference type="PROSITE" id="PS00099">
    <property type="entry name" value="THIOLASE_3"/>
    <property type="match status" value="1"/>
</dbReference>
<gene>
    <name type="ordered locus">SA0342</name>
</gene>
<proteinExistence type="evidence at protein level"/>
<reference key="1">
    <citation type="journal article" date="2001" name="Lancet">
        <title>Whole genome sequencing of meticillin-resistant Staphylococcus aureus.</title>
        <authorList>
            <person name="Kuroda M."/>
            <person name="Ohta T."/>
            <person name="Uchiyama I."/>
            <person name="Baba T."/>
            <person name="Yuzawa H."/>
            <person name="Kobayashi I."/>
            <person name="Cui L."/>
            <person name="Oguchi A."/>
            <person name="Aoki K."/>
            <person name="Nagai Y."/>
            <person name="Lian J.-Q."/>
            <person name="Ito T."/>
            <person name="Kanamori M."/>
            <person name="Matsumaru H."/>
            <person name="Maruyama A."/>
            <person name="Murakami H."/>
            <person name="Hosoyama A."/>
            <person name="Mizutani-Ui Y."/>
            <person name="Takahashi N.K."/>
            <person name="Sawano T."/>
            <person name="Inoue R."/>
            <person name="Kaito C."/>
            <person name="Sekimizu K."/>
            <person name="Hirakawa H."/>
            <person name="Kuhara S."/>
            <person name="Goto S."/>
            <person name="Yabuzaki J."/>
            <person name="Kanehisa M."/>
            <person name="Yamashita A."/>
            <person name="Oshima K."/>
            <person name="Furuya K."/>
            <person name="Yoshino C."/>
            <person name="Shiba T."/>
            <person name="Hattori M."/>
            <person name="Ogasawara N."/>
            <person name="Hayashi H."/>
            <person name="Hiramatsu K."/>
        </authorList>
    </citation>
    <scope>NUCLEOTIDE SEQUENCE [LARGE SCALE GENOMIC DNA]</scope>
    <source>
        <strain>N315</strain>
    </source>
</reference>
<reference key="2">
    <citation type="journal article" date="2005" name="J. Microbiol. Methods">
        <title>Correlation of proteomic and transcriptomic profiles of Staphylococcus aureus during the post-exponential phase of growth.</title>
        <authorList>
            <person name="Scherl A."/>
            <person name="Francois P."/>
            <person name="Bento M."/>
            <person name="Deshusses J.M."/>
            <person name="Charbonnier Y."/>
            <person name="Converset V."/>
            <person name="Huyghe A."/>
            <person name="Walter N."/>
            <person name="Hoogland C."/>
            <person name="Appel R.D."/>
            <person name="Sanchez J.-C."/>
            <person name="Zimmermann-Ivol C.G."/>
            <person name="Corthals G.L."/>
            <person name="Hochstrasser D.F."/>
            <person name="Schrenzel J."/>
        </authorList>
    </citation>
    <scope>IDENTIFICATION BY MASS SPECTROMETRY</scope>
    <source>
        <strain>N315</strain>
    </source>
</reference>
<reference key="3">
    <citation type="submission" date="2007-10" db="UniProtKB">
        <title>Shotgun proteomic analysis of total and membrane protein extracts of S. aureus strain N315.</title>
        <authorList>
            <person name="Vaezzadeh A.R."/>
            <person name="Deshusses J."/>
            <person name="Lescuyer P."/>
            <person name="Hochstrasser D.F."/>
        </authorList>
    </citation>
    <scope>IDENTIFICATION BY MASS SPECTROMETRY [LARGE SCALE ANALYSIS]</scope>
    <source>
        <strain>N315</strain>
    </source>
</reference>
<sequence length="393" mass="41753">MTRVVLAAAYRTPIGVFGGAFKDVPAYDLGATLIEHIIKETGLNPSEIDEVIIGNVLQAGQGQNPARIAAMKGGLPETVPAFTVNKVCGSGLKSIQLAYQSIVTGENDIVLAGGMENMSQSPMLVNNSRFGFKMGHQSMVDSMVYDGLTDVFNQYHMGITAENLVEQYGISREEQDTFAVNSQHKAVRAQQNGEFDSEIVPVSIPQRKGEPILVTKDEGVRENVSVEKLSRLRPAFKKDGTVTAGNASGINDGAAMMLVMSEDKAKELNIEPLAVLDGFGSHGVDPSIMGIAPVGAVEKALKRSKKELSDIDVFELNEAFAAQLLAVDRELKLPPEKVNVKGGAIALGHPIGASGARVLVTLLHQLNDEVETGLTSLCIGGGQAIAAVVSKYK</sequence>
<organism>
    <name type="scientific">Staphylococcus aureus (strain N315)</name>
    <dbReference type="NCBI Taxonomy" id="158879"/>
    <lineage>
        <taxon>Bacteria</taxon>
        <taxon>Bacillati</taxon>
        <taxon>Bacillota</taxon>
        <taxon>Bacilli</taxon>
        <taxon>Bacillales</taxon>
        <taxon>Staphylococcaceae</taxon>
        <taxon>Staphylococcus</taxon>
    </lineage>
</organism>
<protein>
    <recommendedName>
        <fullName>Probable acetyl-CoA acyltransferase</fullName>
        <ecNumber>2.3.1.9</ecNumber>
    </recommendedName>
    <alternativeName>
        <fullName>Acetoacetyl-CoA thiolase</fullName>
    </alternativeName>
</protein>
<feature type="chain" id="PRO_0000270505" description="Probable acetyl-CoA acyltransferase">
    <location>
        <begin position="1"/>
        <end position="393"/>
    </location>
</feature>
<feature type="active site" description="Acyl-thioester intermediate" evidence="1">
    <location>
        <position position="88"/>
    </location>
</feature>
<feature type="active site" description="Proton acceptor" evidence="2">
    <location>
        <position position="349"/>
    </location>
</feature>
<feature type="active site" description="Proton acceptor" evidence="2">
    <location>
        <position position="378"/>
    </location>
</feature>
<evidence type="ECO:0000250" key="1"/>
<evidence type="ECO:0000255" key="2">
    <source>
        <dbReference type="PROSITE-ProRule" id="PRU10020"/>
    </source>
</evidence>
<evidence type="ECO:0000305" key="3"/>
<accession>Q7A7L2</accession>
<keyword id="KW-0012">Acyltransferase</keyword>
<keyword id="KW-0963">Cytoplasm</keyword>
<keyword id="KW-0808">Transferase</keyword>
<name>THLA_STAAN</name>